<comment type="function">
    <text evidence="1">Catalyzes the NADPH-dependent reduction of 7-cyano-7-deazaguanine (preQ0) to 7-aminomethyl-7-deazaguanine (preQ1).</text>
</comment>
<comment type="catalytic activity">
    <reaction evidence="1">
        <text>7-aminomethyl-7-carbaguanine + 2 NADP(+) = 7-cyano-7-deazaguanine + 2 NADPH + 3 H(+)</text>
        <dbReference type="Rhea" id="RHEA:13409"/>
        <dbReference type="ChEBI" id="CHEBI:15378"/>
        <dbReference type="ChEBI" id="CHEBI:45075"/>
        <dbReference type="ChEBI" id="CHEBI:57783"/>
        <dbReference type="ChEBI" id="CHEBI:58349"/>
        <dbReference type="ChEBI" id="CHEBI:58703"/>
        <dbReference type="EC" id="1.7.1.13"/>
    </reaction>
</comment>
<comment type="pathway">
    <text evidence="1">tRNA modification; tRNA-queuosine biosynthesis.</text>
</comment>
<comment type="subcellular location">
    <subcellularLocation>
        <location evidence="1">Cytoplasm</location>
    </subcellularLocation>
</comment>
<comment type="similarity">
    <text evidence="1">Belongs to the GTP cyclohydrolase I family. QueF type 1 subfamily.</text>
</comment>
<gene>
    <name evidence="1" type="primary">queF</name>
    <name type="ordered locus">TTE1563</name>
</gene>
<protein>
    <recommendedName>
        <fullName evidence="1">NADPH-dependent 7-cyano-7-deazaguanine reductase</fullName>
        <ecNumber evidence="1">1.7.1.13</ecNumber>
    </recommendedName>
    <alternativeName>
        <fullName evidence="1">7-cyano-7-carbaguanine reductase</fullName>
    </alternativeName>
    <alternativeName>
        <fullName evidence="1">NADPH-dependent nitrile oxidoreductase</fullName>
    </alternativeName>
    <alternativeName>
        <fullName evidence="1">PreQ(0) reductase</fullName>
    </alternativeName>
</protein>
<feature type="chain" id="PRO_0000163014" description="NADPH-dependent 7-cyano-7-deazaguanine reductase">
    <location>
        <begin position="1"/>
        <end position="134"/>
    </location>
</feature>
<feature type="active site" description="Thioimide intermediate" evidence="1">
    <location>
        <position position="48"/>
    </location>
</feature>
<feature type="active site" description="Proton donor" evidence="1">
    <location>
        <position position="55"/>
    </location>
</feature>
<feature type="binding site" evidence="1">
    <location>
        <begin position="70"/>
        <end position="72"/>
    </location>
    <ligand>
        <name>substrate</name>
    </ligand>
</feature>
<feature type="binding site" evidence="1">
    <location>
        <begin position="89"/>
        <end position="90"/>
    </location>
    <ligand>
        <name>substrate</name>
    </ligand>
</feature>
<evidence type="ECO:0000255" key="1">
    <source>
        <dbReference type="HAMAP-Rule" id="MF_00818"/>
    </source>
</evidence>
<name>QUEF_CALS4</name>
<sequence length="134" mass="16088">MTDKYKERRFDIYGYEKIDKEVLESIEYEYPEKNTIVEYITDEFSSVCPWTGLPDNAKLTIRYIPHKKLVELKSLKYYLTSYRNVGILQEHAINRILDDLVEFLQPKFMEIIGEFQERGGIATRIIARYEKEEY</sequence>
<reference key="1">
    <citation type="journal article" date="2002" name="Genome Res.">
        <title>A complete sequence of the T. tengcongensis genome.</title>
        <authorList>
            <person name="Bao Q."/>
            <person name="Tian Y."/>
            <person name="Li W."/>
            <person name="Xu Z."/>
            <person name="Xuan Z."/>
            <person name="Hu S."/>
            <person name="Dong W."/>
            <person name="Yang J."/>
            <person name="Chen Y."/>
            <person name="Xue Y."/>
            <person name="Xu Y."/>
            <person name="Lai X."/>
            <person name="Huang L."/>
            <person name="Dong X."/>
            <person name="Ma Y."/>
            <person name="Ling L."/>
            <person name="Tan H."/>
            <person name="Chen R."/>
            <person name="Wang J."/>
            <person name="Yu J."/>
            <person name="Yang H."/>
        </authorList>
    </citation>
    <scope>NUCLEOTIDE SEQUENCE [LARGE SCALE GENOMIC DNA]</scope>
    <source>
        <strain>DSM 15242 / JCM 11007 / NBRC 100824 / MB4</strain>
    </source>
</reference>
<organism>
    <name type="scientific">Caldanaerobacter subterraneus subsp. tengcongensis (strain DSM 15242 / JCM 11007 / NBRC 100824 / MB4)</name>
    <name type="common">Thermoanaerobacter tengcongensis</name>
    <dbReference type="NCBI Taxonomy" id="273068"/>
    <lineage>
        <taxon>Bacteria</taxon>
        <taxon>Bacillati</taxon>
        <taxon>Bacillota</taxon>
        <taxon>Clostridia</taxon>
        <taxon>Thermoanaerobacterales</taxon>
        <taxon>Thermoanaerobacteraceae</taxon>
        <taxon>Caldanaerobacter</taxon>
    </lineage>
</organism>
<dbReference type="EC" id="1.7.1.13" evidence="1"/>
<dbReference type="EMBL" id="AE008691">
    <property type="protein sequence ID" value="AAM24767.1"/>
    <property type="molecule type" value="Genomic_DNA"/>
</dbReference>
<dbReference type="RefSeq" id="WP_011025802.1">
    <property type="nucleotide sequence ID" value="NC_003869.1"/>
</dbReference>
<dbReference type="SMR" id="Q8R9P3"/>
<dbReference type="STRING" id="273068.TTE1563"/>
<dbReference type="KEGG" id="tte:TTE1563"/>
<dbReference type="eggNOG" id="COG0780">
    <property type="taxonomic scope" value="Bacteria"/>
</dbReference>
<dbReference type="HOGENOM" id="CLU_102489_1_2_9"/>
<dbReference type="OrthoDB" id="9795077at2"/>
<dbReference type="UniPathway" id="UPA00392"/>
<dbReference type="Proteomes" id="UP000000555">
    <property type="component" value="Chromosome"/>
</dbReference>
<dbReference type="GO" id="GO:0005737">
    <property type="term" value="C:cytoplasm"/>
    <property type="evidence" value="ECO:0007669"/>
    <property type="project" value="UniProtKB-SubCell"/>
</dbReference>
<dbReference type="GO" id="GO:0033739">
    <property type="term" value="F:preQ1 synthase activity"/>
    <property type="evidence" value="ECO:0007669"/>
    <property type="project" value="UniProtKB-UniRule"/>
</dbReference>
<dbReference type="GO" id="GO:0008616">
    <property type="term" value="P:queuosine biosynthetic process"/>
    <property type="evidence" value="ECO:0007669"/>
    <property type="project" value="UniProtKB-UniRule"/>
</dbReference>
<dbReference type="GO" id="GO:0006400">
    <property type="term" value="P:tRNA modification"/>
    <property type="evidence" value="ECO:0007669"/>
    <property type="project" value="UniProtKB-UniRule"/>
</dbReference>
<dbReference type="Gene3D" id="3.30.1130.10">
    <property type="match status" value="1"/>
</dbReference>
<dbReference type="HAMAP" id="MF_00818">
    <property type="entry name" value="QueF_type1"/>
    <property type="match status" value="1"/>
</dbReference>
<dbReference type="InterPro" id="IPR043133">
    <property type="entry name" value="GTP-CH-I_C/QueF"/>
</dbReference>
<dbReference type="InterPro" id="IPR050084">
    <property type="entry name" value="NADPH_dep_7-cyano-7-deazaG_red"/>
</dbReference>
<dbReference type="InterPro" id="IPR029500">
    <property type="entry name" value="QueF"/>
</dbReference>
<dbReference type="InterPro" id="IPR016856">
    <property type="entry name" value="QueF_type1"/>
</dbReference>
<dbReference type="NCBIfam" id="TIGR03139">
    <property type="entry name" value="QueF-II"/>
    <property type="match status" value="1"/>
</dbReference>
<dbReference type="PANTHER" id="PTHR34354">
    <property type="entry name" value="NADPH-DEPENDENT 7-CYANO-7-DEAZAGUANINE REDUCTASE"/>
    <property type="match status" value="1"/>
</dbReference>
<dbReference type="PANTHER" id="PTHR34354:SF1">
    <property type="entry name" value="NADPH-DEPENDENT 7-CYANO-7-DEAZAGUANINE REDUCTASE"/>
    <property type="match status" value="1"/>
</dbReference>
<dbReference type="Pfam" id="PF14489">
    <property type="entry name" value="QueF"/>
    <property type="match status" value="1"/>
</dbReference>
<dbReference type="PIRSF" id="PIRSF027377">
    <property type="entry name" value="Nitrile_oxidored_QueF"/>
    <property type="match status" value="1"/>
</dbReference>
<dbReference type="SUPFAM" id="SSF55620">
    <property type="entry name" value="Tetrahydrobiopterin biosynthesis enzymes-like"/>
    <property type="match status" value="1"/>
</dbReference>
<accession>Q8R9P3</accession>
<keyword id="KW-0963">Cytoplasm</keyword>
<keyword id="KW-0521">NADP</keyword>
<keyword id="KW-0560">Oxidoreductase</keyword>
<keyword id="KW-0671">Queuosine biosynthesis</keyword>
<keyword id="KW-1185">Reference proteome</keyword>
<proteinExistence type="inferred from homology"/>